<feature type="chain" id="PRO_0000093693" description="Inosine-5'-monophosphate dehydrogenase">
    <location>
        <begin position="1"/>
        <end position="494"/>
    </location>
</feature>
<feature type="domain" description="CBS 1" evidence="1">
    <location>
        <begin position="93"/>
        <end position="154"/>
    </location>
</feature>
<feature type="domain" description="CBS 2" evidence="1">
    <location>
        <begin position="158"/>
        <end position="217"/>
    </location>
</feature>
<feature type="active site" description="Thioimidate intermediate" evidence="1">
    <location>
        <position position="308"/>
    </location>
</feature>
<feature type="active site" description="Proton acceptor" evidence="1">
    <location>
        <position position="406"/>
    </location>
</feature>
<feature type="binding site" evidence="1">
    <location>
        <position position="251"/>
    </location>
    <ligand>
        <name>NAD(+)</name>
        <dbReference type="ChEBI" id="CHEBI:57540"/>
    </ligand>
</feature>
<feature type="binding site" evidence="1">
    <location>
        <begin position="301"/>
        <end position="303"/>
    </location>
    <ligand>
        <name>NAD(+)</name>
        <dbReference type="ChEBI" id="CHEBI:57540"/>
    </ligand>
</feature>
<feature type="binding site" description="in other chain" evidence="1">
    <location>
        <position position="303"/>
    </location>
    <ligand>
        <name>K(+)</name>
        <dbReference type="ChEBI" id="CHEBI:29103"/>
        <note>ligand shared between two tetrameric partners</note>
    </ligand>
</feature>
<feature type="binding site" description="in other chain" evidence="1">
    <location>
        <position position="305"/>
    </location>
    <ligand>
        <name>K(+)</name>
        <dbReference type="ChEBI" id="CHEBI:29103"/>
        <note>ligand shared between two tetrameric partners</note>
    </ligand>
</feature>
<feature type="binding site" evidence="1">
    <location>
        <position position="306"/>
    </location>
    <ligand>
        <name>IMP</name>
        <dbReference type="ChEBI" id="CHEBI:58053"/>
    </ligand>
</feature>
<feature type="binding site" description="in other chain" evidence="1">
    <location>
        <position position="308"/>
    </location>
    <ligand>
        <name>K(+)</name>
        <dbReference type="ChEBI" id="CHEBI:29103"/>
        <note>ligand shared between two tetrameric partners</note>
    </ligand>
</feature>
<feature type="binding site" evidence="1">
    <location>
        <begin position="341"/>
        <end position="343"/>
    </location>
    <ligand>
        <name>IMP</name>
        <dbReference type="ChEBI" id="CHEBI:58053"/>
    </ligand>
</feature>
<feature type="binding site" evidence="1">
    <location>
        <begin position="364"/>
        <end position="365"/>
    </location>
    <ligand>
        <name>IMP</name>
        <dbReference type="ChEBI" id="CHEBI:58053"/>
    </ligand>
</feature>
<feature type="binding site" evidence="1">
    <location>
        <begin position="388"/>
        <end position="392"/>
    </location>
    <ligand>
        <name>IMP</name>
        <dbReference type="ChEBI" id="CHEBI:58053"/>
    </ligand>
</feature>
<feature type="binding site" evidence="1">
    <location>
        <position position="421"/>
    </location>
    <ligand>
        <name>IMP</name>
        <dbReference type="ChEBI" id="CHEBI:58053"/>
    </ligand>
</feature>
<feature type="binding site" evidence="1">
    <location>
        <position position="475"/>
    </location>
    <ligand>
        <name>K(+)</name>
        <dbReference type="ChEBI" id="CHEBI:29103"/>
        <note>ligand shared between two tetrameric partners</note>
    </ligand>
</feature>
<feature type="binding site" evidence="1">
    <location>
        <position position="476"/>
    </location>
    <ligand>
        <name>K(+)</name>
        <dbReference type="ChEBI" id="CHEBI:29103"/>
        <note>ligand shared between two tetrameric partners</note>
    </ligand>
</feature>
<feature type="binding site" evidence="1">
    <location>
        <position position="477"/>
    </location>
    <ligand>
        <name>K(+)</name>
        <dbReference type="ChEBI" id="CHEBI:29103"/>
        <note>ligand shared between two tetrameric partners</note>
    </ligand>
</feature>
<evidence type="ECO:0000255" key="1">
    <source>
        <dbReference type="HAMAP-Rule" id="MF_01964"/>
    </source>
</evidence>
<gene>
    <name evidence="1" type="primary">guaB</name>
    <name type="ordered locus">CT1293</name>
</gene>
<accession>Q8KCW4</accession>
<comment type="function">
    <text evidence="1">Catalyzes the conversion of inosine 5'-phosphate (IMP) to xanthosine 5'-phosphate (XMP), the first committed and rate-limiting step in the de novo synthesis of guanine nucleotides, and therefore plays an important role in the regulation of cell growth.</text>
</comment>
<comment type="catalytic activity">
    <reaction evidence="1">
        <text>IMP + NAD(+) + H2O = XMP + NADH + H(+)</text>
        <dbReference type="Rhea" id="RHEA:11708"/>
        <dbReference type="ChEBI" id="CHEBI:15377"/>
        <dbReference type="ChEBI" id="CHEBI:15378"/>
        <dbReference type="ChEBI" id="CHEBI:57464"/>
        <dbReference type="ChEBI" id="CHEBI:57540"/>
        <dbReference type="ChEBI" id="CHEBI:57945"/>
        <dbReference type="ChEBI" id="CHEBI:58053"/>
        <dbReference type="EC" id="1.1.1.205"/>
    </reaction>
</comment>
<comment type="cofactor">
    <cofactor evidence="1">
        <name>K(+)</name>
        <dbReference type="ChEBI" id="CHEBI:29103"/>
    </cofactor>
</comment>
<comment type="activity regulation">
    <text evidence="1">Mycophenolic acid (MPA) is a non-competitive inhibitor that prevents formation of the closed enzyme conformation by binding to the same site as the amobile flap. In contrast, mizoribine monophosphate (MZP) is a competitive inhibitor that induces the closed conformation. MPA is a potent inhibitor of mammalian IMPDHs but a poor inhibitor of the bacterial enzymes. MZP is a more potent inhibitor of bacterial IMPDH.</text>
</comment>
<comment type="pathway">
    <text evidence="1">Purine metabolism; XMP biosynthesis via de novo pathway; XMP from IMP: step 1/1.</text>
</comment>
<comment type="subunit">
    <text evidence="1">Homotetramer.</text>
</comment>
<comment type="similarity">
    <text evidence="1">Belongs to the IMPDH/GMPR family.</text>
</comment>
<dbReference type="EC" id="1.1.1.205" evidence="1"/>
<dbReference type="EMBL" id="AE006470">
    <property type="protein sequence ID" value="AAM72523.1"/>
    <property type="molecule type" value="Genomic_DNA"/>
</dbReference>
<dbReference type="RefSeq" id="NP_662181.1">
    <property type="nucleotide sequence ID" value="NC_002932.3"/>
</dbReference>
<dbReference type="RefSeq" id="WP_010932962.1">
    <property type="nucleotide sequence ID" value="NC_002932.3"/>
</dbReference>
<dbReference type="SMR" id="Q8KCW4"/>
<dbReference type="STRING" id="194439.CT1293"/>
<dbReference type="EnsemblBacteria" id="AAM72523">
    <property type="protein sequence ID" value="AAM72523"/>
    <property type="gene ID" value="CT1293"/>
</dbReference>
<dbReference type="KEGG" id="cte:CT1293"/>
<dbReference type="PATRIC" id="fig|194439.7.peg.1178"/>
<dbReference type="eggNOG" id="COG0516">
    <property type="taxonomic scope" value="Bacteria"/>
</dbReference>
<dbReference type="HOGENOM" id="CLU_022552_2_1_10"/>
<dbReference type="OrthoDB" id="9805398at2"/>
<dbReference type="UniPathway" id="UPA00601">
    <property type="reaction ID" value="UER00295"/>
</dbReference>
<dbReference type="Proteomes" id="UP000001007">
    <property type="component" value="Chromosome"/>
</dbReference>
<dbReference type="GO" id="GO:0003938">
    <property type="term" value="F:IMP dehydrogenase activity"/>
    <property type="evidence" value="ECO:0007669"/>
    <property type="project" value="UniProtKB-UniRule"/>
</dbReference>
<dbReference type="GO" id="GO:0046872">
    <property type="term" value="F:metal ion binding"/>
    <property type="evidence" value="ECO:0007669"/>
    <property type="project" value="UniProtKB-UniRule"/>
</dbReference>
<dbReference type="GO" id="GO:0000166">
    <property type="term" value="F:nucleotide binding"/>
    <property type="evidence" value="ECO:0007669"/>
    <property type="project" value="UniProtKB-UniRule"/>
</dbReference>
<dbReference type="GO" id="GO:0006177">
    <property type="term" value="P:GMP biosynthetic process"/>
    <property type="evidence" value="ECO:0007669"/>
    <property type="project" value="UniProtKB-UniRule"/>
</dbReference>
<dbReference type="GO" id="GO:0006183">
    <property type="term" value="P:GTP biosynthetic process"/>
    <property type="evidence" value="ECO:0007669"/>
    <property type="project" value="TreeGrafter"/>
</dbReference>
<dbReference type="CDD" id="cd04601">
    <property type="entry name" value="CBS_pair_IMPDH"/>
    <property type="match status" value="1"/>
</dbReference>
<dbReference type="CDD" id="cd00381">
    <property type="entry name" value="IMPDH"/>
    <property type="match status" value="1"/>
</dbReference>
<dbReference type="FunFam" id="3.20.20.70:FF:000003">
    <property type="entry name" value="GMP reductase"/>
    <property type="match status" value="1"/>
</dbReference>
<dbReference type="Gene3D" id="3.20.20.70">
    <property type="entry name" value="Aldolase class I"/>
    <property type="match status" value="1"/>
</dbReference>
<dbReference type="HAMAP" id="MF_01964">
    <property type="entry name" value="IMPDH"/>
    <property type="match status" value="1"/>
</dbReference>
<dbReference type="InterPro" id="IPR013785">
    <property type="entry name" value="Aldolase_TIM"/>
</dbReference>
<dbReference type="InterPro" id="IPR000644">
    <property type="entry name" value="CBS_dom"/>
</dbReference>
<dbReference type="InterPro" id="IPR005990">
    <property type="entry name" value="IMP_DH"/>
</dbReference>
<dbReference type="InterPro" id="IPR015875">
    <property type="entry name" value="IMP_DH/GMP_Rdtase_CS"/>
</dbReference>
<dbReference type="InterPro" id="IPR001093">
    <property type="entry name" value="IMP_DH_GMPRt"/>
</dbReference>
<dbReference type="NCBIfam" id="TIGR01302">
    <property type="entry name" value="IMP_dehydrog"/>
    <property type="match status" value="1"/>
</dbReference>
<dbReference type="PANTHER" id="PTHR11911:SF111">
    <property type="entry name" value="INOSINE-5'-MONOPHOSPHATE DEHYDROGENASE"/>
    <property type="match status" value="1"/>
</dbReference>
<dbReference type="PANTHER" id="PTHR11911">
    <property type="entry name" value="INOSINE-5-MONOPHOSPHATE DEHYDROGENASE RELATED"/>
    <property type="match status" value="1"/>
</dbReference>
<dbReference type="Pfam" id="PF00571">
    <property type="entry name" value="CBS"/>
    <property type="match status" value="2"/>
</dbReference>
<dbReference type="Pfam" id="PF00478">
    <property type="entry name" value="IMPDH"/>
    <property type="match status" value="1"/>
</dbReference>
<dbReference type="PIRSF" id="PIRSF000130">
    <property type="entry name" value="IMPDH"/>
    <property type="match status" value="1"/>
</dbReference>
<dbReference type="SMART" id="SM00116">
    <property type="entry name" value="CBS"/>
    <property type="match status" value="2"/>
</dbReference>
<dbReference type="SMART" id="SM01240">
    <property type="entry name" value="IMPDH"/>
    <property type="match status" value="1"/>
</dbReference>
<dbReference type="SUPFAM" id="SSF51412">
    <property type="entry name" value="Inosine monophosphate dehydrogenase (IMPDH)"/>
    <property type="match status" value="2"/>
</dbReference>
<dbReference type="PROSITE" id="PS51371">
    <property type="entry name" value="CBS"/>
    <property type="match status" value="2"/>
</dbReference>
<dbReference type="PROSITE" id="PS00487">
    <property type="entry name" value="IMP_DH_GMP_RED"/>
    <property type="match status" value="1"/>
</dbReference>
<sequence>MDKILYDALTFDDVLLVPAYSNVLPKETVVKSRLTRQIEVNIPLVSAAMDTVTEAELAIALARAGGIGIIHKNLSIDEQARQVAKVKRFESGIIRNPIHLFEDATIQDAIDLMIRHSISGIPVVEHPTPEGCLLLKGIVTNRDLRMTASSDEKITTIMTTNLVTAKEGIDLLTAEDILMRNKIEKLLIIDDNGYLKGLITFKDIQKRKQCPDACKDSQGRLRAGAAVGIRANTMSRVDALVAAGVDVVAVDTAHGHSQAVLDMVATIKQKYPELQVIAGNVATPEAVRDLVKAGADAVKVGIGPGSICTTRIVAGVGMPQLTAIMKCAEEAKKTDIPLIADGGIKYSGDIAKALAAGADSVMMGSVFAGTDESPGETILYEGRRFKAYRGMGSLGAMSEPEGSSDRYFQDVSAETKKYVPEGIEGRIPAKGKLDEVVYQLIGGLKSAMGYCGVRTITELKENTRFVRITSAGLRESHPHDVMITKEAPNYSTSA</sequence>
<keyword id="KW-0129">CBS domain</keyword>
<keyword id="KW-0332">GMP biosynthesis</keyword>
<keyword id="KW-0479">Metal-binding</keyword>
<keyword id="KW-0520">NAD</keyword>
<keyword id="KW-0560">Oxidoreductase</keyword>
<keyword id="KW-0630">Potassium</keyword>
<keyword id="KW-0658">Purine biosynthesis</keyword>
<keyword id="KW-1185">Reference proteome</keyword>
<keyword id="KW-0677">Repeat</keyword>
<organism>
    <name type="scientific">Chlorobaculum tepidum (strain ATCC 49652 / DSM 12025 / NBRC 103806 / TLS)</name>
    <name type="common">Chlorobium tepidum</name>
    <dbReference type="NCBI Taxonomy" id="194439"/>
    <lineage>
        <taxon>Bacteria</taxon>
        <taxon>Pseudomonadati</taxon>
        <taxon>Chlorobiota</taxon>
        <taxon>Chlorobiia</taxon>
        <taxon>Chlorobiales</taxon>
        <taxon>Chlorobiaceae</taxon>
        <taxon>Chlorobaculum</taxon>
    </lineage>
</organism>
<name>IMDH_CHLTE</name>
<reference key="1">
    <citation type="journal article" date="2002" name="Proc. Natl. Acad. Sci. U.S.A.">
        <title>The complete genome sequence of Chlorobium tepidum TLS, a photosynthetic, anaerobic, green-sulfur bacterium.</title>
        <authorList>
            <person name="Eisen J.A."/>
            <person name="Nelson K.E."/>
            <person name="Paulsen I.T."/>
            <person name="Heidelberg J.F."/>
            <person name="Wu M."/>
            <person name="Dodson R.J."/>
            <person name="DeBoy R.T."/>
            <person name="Gwinn M.L."/>
            <person name="Nelson W.C."/>
            <person name="Haft D.H."/>
            <person name="Hickey E.K."/>
            <person name="Peterson J.D."/>
            <person name="Durkin A.S."/>
            <person name="Kolonay J.F."/>
            <person name="Yang F."/>
            <person name="Holt I.E."/>
            <person name="Umayam L.A."/>
            <person name="Mason T.M."/>
            <person name="Brenner M."/>
            <person name="Shea T.P."/>
            <person name="Parksey D.S."/>
            <person name="Nierman W.C."/>
            <person name="Feldblyum T.V."/>
            <person name="Hansen C.L."/>
            <person name="Craven M.B."/>
            <person name="Radune D."/>
            <person name="Vamathevan J.J."/>
            <person name="Khouri H.M."/>
            <person name="White O."/>
            <person name="Gruber T.M."/>
            <person name="Ketchum K.A."/>
            <person name="Venter J.C."/>
            <person name="Tettelin H."/>
            <person name="Bryant D.A."/>
            <person name="Fraser C.M."/>
        </authorList>
    </citation>
    <scope>NUCLEOTIDE SEQUENCE [LARGE SCALE GENOMIC DNA]</scope>
    <source>
        <strain>ATCC 49652 / DSM 12025 / NBRC 103806 / TLS</strain>
    </source>
</reference>
<protein>
    <recommendedName>
        <fullName evidence="1">Inosine-5'-monophosphate dehydrogenase</fullName>
        <shortName evidence="1">IMP dehydrogenase</shortName>
        <shortName evidence="1">IMPD</shortName>
        <shortName evidence="1">IMPDH</shortName>
        <ecNumber evidence="1">1.1.1.205</ecNumber>
    </recommendedName>
</protein>
<proteinExistence type="inferred from homology"/>